<dbReference type="EMBL" id="AP008230">
    <property type="protein sequence ID" value="BAE82287.1"/>
    <property type="molecule type" value="Genomic_DNA"/>
</dbReference>
<dbReference type="RefSeq" id="WP_011459108.1">
    <property type="nucleotide sequence ID" value="NC_007907.1"/>
</dbReference>
<dbReference type="SMR" id="Q250K5"/>
<dbReference type="STRING" id="138119.DSY0498"/>
<dbReference type="KEGG" id="dsy:DSY0498"/>
<dbReference type="eggNOG" id="COG0522">
    <property type="taxonomic scope" value="Bacteria"/>
</dbReference>
<dbReference type="HOGENOM" id="CLU_092403_0_2_9"/>
<dbReference type="Proteomes" id="UP000001946">
    <property type="component" value="Chromosome"/>
</dbReference>
<dbReference type="GO" id="GO:0015935">
    <property type="term" value="C:small ribosomal subunit"/>
    <property type="evidence" value="ECO:0007669"/>
    <property type="project" value="InterPro"/>
</dbReference>
<dbReference type="GO" id="GO:0019843">
    <property type="term" value="F:rRNA binding"/>
    <property type="evidence" value="ECO:0007669"/>
    <property type="project" value="UniProtKB-UniRule"/>
</dbReference>
<dbReference type="GO" id="GO:0003735">
    <property type="term" value="F:structural constituent of ribosome"/>
    <property type="evidence" value="ECO:0007669"/>
    <property type="project" value="InterPro"/>
</dbReference>
<dbReference type="GO" id="GO:0042274">
    <property type="term" value="P:ribosomal small subunit biogenesis"/>
    <property type="evidence" value="ECO:0007669"/>
    <property type="project" value="TreeGrafter"/>
</dbReference>
<dbReference type="GO" id="GO:0006412">
    <property type="term" value="P:translation"/>
    <property type="evidence" value="ECO:0007669"/>
    <property type="project" value="UniProtKB-UniRule"/>
</dbReference>
<dbReference type="CDD" id="cd00165">
    <property type="entry name" value="S4"/>
    <property type="match status" value="1"/>
</dbReference>
<dbReference type="FunFam" id="1.10.1050.10:FF:000001">
    <property type="entry name" value="30S ribosomal protein S4"/>
    <property type="match status" value="1"/>
</dbReference>
<dbReference type="FunFam" id="3.10.290.10:FF:000001">
    <property type="entry name" value="30S ribosomal protein S4"/>
    <property type="match status" value="1"/>
</dbReference>
<dbReference type="Gene3D" id="1.10.1050.10">
    <property type="entry name" value="Ribosomal Protein S4 Delta 41, Chain A, domain 1"/>
    <property type="match status" value="1"/>
</dbReference>
<dbReference type="Gene3D" id="3.10.290.10">
    <property type="entry name" value="RNA-binding S4 domain"/>
    <property type="match status" value="1"/>
</dbReference>
<dbReference type="HAMAP" id="MF_01306_B">
    <property type="entry name" value="Ribosomal_uS4_B"/>
    <property type="match status" value="1"/>
</dbReference>
<dbReference type="InterPro" id="IPR022801">
    <property type="entry name" value="Ribosomal_uS4"/>
</dbReference>
<dbReference type="InterPro" id="IPR005709">
    <property type="entry name" value="Ribosomal_uS4_bac-type"/>
</dbReference>
<dbReference type="InterPro" id="IPR001912">
    <property type="entry name" value="Ribosomal_uS4_N"/>
</dbReference>
<dbReference type="InterPro" id="IPR002942">
    <property type="entry name" value="S4_RNA-bd"/>
</dbReference>
<dbReference type="InterPro" id="IPR036986">
    <property type="entry name" value="S4_RNA-bd_sf"/>
</dbReference>
<dbReference type="NCBIfam" id="NF003717">
    <property type="entry name" value="PRK05327.1"/>
    <property type="match status" value="1"/>
</dbReference>
<dbReference type="NCBIfam" id="TIGR01017">
    <property type="entry name" value="rpsD_bact"/>
    <property type="match status" value="1"/>
</dbReference>
<dbReference type="PANTHER" id="PTHR11831">
    <property type="entry name" value="30S 40S RIBOSOMAL PROTEIN"/>
    <property type="match status" value="1"/>
</dbReference>
<dbReference type="PANTHER" id="PTHR11831:SF4">
    <property type="entry name" value="SMALL RIBOSOMAL SUBUNIT PROTEIN US4M"/>
    <property type="match status" value="1"/>
</dbReference>
<dbReference type="Pfam" id="PF00163">
    <property type="entry name" value="Ribosomal_S4"/>
    <property type="match status" value="1"/>
</dbReference>
<dbReference type="Pfam" id="PF01479">
    <property type="entry name" value="S4"/>
    <property type="match status" value="1"/>
</dbReference>
<dbReference type="SMART" id="SM01390">
    <property type="entry name" value="Ribosomal_S4"/>
    <property type="match status" value="1"/>
</dbReference>
<dbReference type="SMART" id="SM00363">
    <property type="entry name" value="S4"/>
    <property type="match status" value="1"/>
</dbReference>
<dbReference type="SUPFAM" id="SSF55174">
    <property type="entry name" value="Alpha-L RNA-binding motif"/>
    <property type="match status" value="1"/>
</dbReference>
<dbReference type="PROSITE" id="PS50889">
    <property type="entry name" value="S4"/>
    <property type="match status" value="1"/>
</dbReference>
<comment type="function">
    <text evidence="1">One of the primary rRNA binding proteins, it binds directly to 16S rRNA where it nucleates assembly of the body of the 30S subunit.</text>
</comment>
<comment type="function">
    <text evidence="1">With S5 and S12 plays an important role in translational accuracy.</text>
</comment>
<comment type="subunit">
    <text evidence="1">Part of the 30S ribosomal subunit. Contacts protein S5. The interaction surface between S4 and S5 is involved in control of translational fidelity.</text>
</comment>
<comment type="similarity">
    <text evidence="1">Belongs to the universal ribosomal protein uS4 family.</text>
</comment>
<keyword id="KW-1185">Reference proteome</keyword>
<keyword id="KW-0687">Ribonucleoprotein</keyword>
<keyword id="KW-0689">Ribosomal protein</keyword>
<keyword id="KW-0694">RNA-binding</keyword>
<keyword id="KW-0699">rRNA-binding</keyword>
<evidence type="ECO:0000255" key="1">
    <source>
        <dbReference type="HAMAP-Rule" id="MF_01306"/>
    </source>
</evidence>
<evidence type="ECO:0000305" key="2"/>
<reference key="1">
    <citation type="journal article" date="2006" name="J. Bacteriol.">
        <title>Complete genome sequence of the dehalorespiring bacterium Desulfitobacterium hafniense Y51 and comparison with Dehalococcoides ethenogenes 195.</title>
        <authorList>
            <person name="Nonaka H."/>
            <person name="Keresztes G."/>
            <person name="Shinoda Y."/>
            <person name="Ikenaga Y."/>
            <person name="Abe M."/>
            <person name="Naito K."/>
            <person name="Inatomi K."/>
            <person name="Furukawa K."/>
            <person name="Inui M."/>
            <person name="Yukawa H."/>
        </authorList>
    </citation>
    <scope>NUCLEOTIDE SEQUENCE [LARGE SCALE GENOMIC DNA]</scope>
    <source>
        <strain>Y51</strain>
    </source>
</reference>
<accession>Q250K5</accession>
<name>RS4_DESHY</name>
<proteinExistence type="inferred from homology"/>
<feature type="chain" id="PRO_0000293270" description="Small ribosomal subunit protein uS4">
    <location>
        <begin position="1"/>
        <end position="208"/>
    </location>
</feature>
<feature type="domain" description="S4 RNA-binding" evidence="1">
    <location>
        <begin position="99"/>
        <end position="165"/>
    </location>
</feature>
<protein>
    <recommendedName>
        <fullName evidence="1">Small ribosomal subunit protein uS4</fullName>
    </recommendedName>
    <alternativeName>
        <fullName evidence="2">30S ribosomal protein S4</fullName>
    </alternativeName>
</protein>
<organism>
    <name type="scientific">Desulfitobacterium hafniense (strain Y51)</name>
    <dbReference type="NCBI Taxonomy" id="138119"/>
    <lineage>
        <taxon>Bacteria</taxon>
        <taxon>Bacillati</taxon>
        <taxon>Bacillota</taxon>
        <taxon>Clostridia</taxon>
        <taxon>Eubacteriales</taxon>
        <taxon>Desulfitobacteriaceae</taxon>
        <taxon>Desulfitobacterium</taxon>
    </lineage>
</organism>
<gene>
    <name evidence="1" type="primary">rpsD</name>
    <name type="ordered locus">DSY0498</name>
</gene>
<sequence>MARYTGPVCRLCRREGMKLFLKGDRCYTGKCAIDRRAYAPGQHGQSRGKKPTEYGIQLREKQKVRRIYGVQEKQFRSYYDKANRQKGIVGENLLRLLERRLDNVVFQLGFATSRPEARQLVRHGHFTINGRRVDIPSFLVRVGDVVGVKEASKSSPRLKEILSSLDRTPPKWMNLDANAATGTIIALPDREDIQLPIQEHLIVEKYSR</sequence>